<protein>
    <recommendedName>
        <fullName evidence="2">Ornithine carbamoyltransferase</fullName>
        <shortName evidence="2">OTCase</shortName>
        <ecNumber evidence="2">2.1.3.3</ecNumber>
    </recommendedName>
</protein>
<evidence type="ECO:0000250" key="1"/>
<evidence type="ECO:0000255" key="2">
    <source>
        <dbReference type="HAMAP-Rule" id="MF_01109"/>
    </source>
</evidence>
<comment type="function">
    <text evidence="1">Reversibly catalyzes the transfer of the carbamoyl group from carbamoyl phosphate (CP) to the N(epsilon) atom of ornithine (ORN) to produce L-citrulline.</text>
</comment>
<comment type="catalytic activity">
    <reaction evidence="2">
        <text>carbamoyl phosphate + L-ornithine = L-citrulline + phosphate + H(+)</text>
        <dbReference type="Rhea" id="RHEA:19513"/>
        <dbReference type="ChEBI" id="CHEBI:15378"/>
        <dbReference type="ChEBI" id="CHEBI:43474"/>
        <dbReference type="ChEBI" id="CHEBI:46911"/>
        <dbReference type="ChEBI" id="CHEBI:57743"/>
        <dbReference type="ChEBI" id="CHEBI:58228"/>
        <dbReference type="EC" id="2.1.3.3"/>
    </reaction>
</comment>
<comment type="pathway">
    <text evidence="2">Amino-acid biosynthesis; L-arginine biosynthesis; L-arginine from L-ornithine and carbamoyl phosphate: step 1/3.</text>
</comment>
<comment type="subcellular location">
    <subcellularLocation>
        <location evidence="2">Cytoplasm</location>
    </subcellularLocation>
</comment>
<comment type="similarity">
    <text evidence="2">Belongs to the aspartate/ornithine carbamoyltransferase superfamily. OTCase family.</text>
</comment>
<accession>Q9K8V8</accession>
<dbReference type="EC" id="2.1.3.3" evidence="2"/>
<dbReference type="EMBL" id="BA000004">
    <property type="protein sequence ID" value="BAB06613.1"/>
    <property type="molecule type" value="Genomic_DNA"/>
</dbReference>
<dbReference type="PIR" id="F84011">
    <property type="entry name" value="F84011"/>
</dbReference>
<dbReference type="RefSeq" id="WP_010899041.1">
    <property type="nucleotide sequence ID" value="NC_002570.2"/>
</dbReference>
<dbReference type="SMR" id="Q9K8V8"/>
<dbReference type="STRING" id="272558.gene:10728804"/>
<dbReference type="KEGG" id="bha:BH2894"/>
<dbReference type="eggNOG" id="COG0078">
    <property type="taxonomic scope" value="Bacteria"/>
</dbReference>
<dbReference type="HOGENOM" id="CLU_043846_3_2_9"/>
<dbReference type="OrthoDB" id="9802587at2"/>
<dbReference type="UniPathway" id="UPA00068">
    <property type="reaction ID" value="UER00112"/>
</dbReference>
<dbReference type="Proteomes" id="UP000001258">
    <property type="component" value="Chromosome"/>
</dbReference>
<dbReference type="GO" id="GO:0005737">
    <property type="term" value="C:cytoplasm"/>
    <property type="evidence" value="ECO:0007669"/>
    <property type="project" value="UniProtKB-SubCell"/>
</dbReference>
<dbReference type="GO" id="GO:0016597">
    <property type="term" value="F:amino acid binding"/>
    <property type="evidence" value="ECO:0007669"/>
    <property type="project" value="InterPro"/>
</dbReference>
<dbReference type="GO" id="GO:0004585">
    <property type="term" value="F:ornithine carbamoyltransferase activity"/>
    <property type="evidence" value="ECO:0007669"/>
    <property type="project" value="UniProtKB-UniRule"/>
</dbReference>
<dbReference type="GO" id="GO:0042450">
    <property type="term" value="P:arginine biosynthetic process via ornithine"/>
    <property type="evidence" value="ECO:0007669"/>
    <property type="project" value="TreeGrafter"/>
</dbReference>
<dbReference type="GO" id="GO:0019240">
    <property type="term" value="P:citrulline biosynthetic process"/>
    <property type="evidence" value="ECO:0007669"/>
    <property type="project" value="TreeGrafter"/>
</dbReference>
<dbReference type="GO" id="GO:0006526">
    <property type="term" value="P:L-arginine biosynthetic process"/>
    <property type="evidence" value="ECO:0007669"/>
    <property type="project" value="UniProtKB-UniRule"/>
</dbReference>
<dbReference type="FunFam" id="3.40.50.1370:FF:000008">
    <property type="entry name" value="Ornithine carbamoyltransferase"/>
    <property type="match status" value="1"/>
</dbReference>
<dbReference type="FunFam" id="3.40.50.1370:FF:000016">
    <property type="entry name" value="Ornithine carbamoyltransferase"/>
    <property type="match status" value="1"/>
</dbReference>
<dbReference type="Gene3D" id="3.40.50.1370">
    <property type="entry name" value="Aspartate/ornithine carbamoyltransferase"/>
    <property type="match status" value="2"/>
</dbReference>
<dbReference type="HAMAP" id="MF_01109">
    <property type="entry name" value="OTCase"/>
    <property type="match status" value="1"/>
</dbReference>
<dbReference type="InterPro" id="IPR006132">
    <property type="entry name" value="Asp/Orn_carbamoyltranf_P-bd"/>
</dbReference>
<dbReference type="InterPro" id="IPR006130">
    <property type="entry name" value="Asp/Orn_carbamoylTrfase"/>
</dbReference>
<dbReference type="InterPro" id="IPR036901">
    <property type="entry name" value="Asp/Orn_carbamoylTrfase_sf"/>
</dbReference>
<dbReference type="InterPro" id="IPR006131">
    <property type="entry name" value="Asp_carbamoyltransf_Asp/Orn-bd"/>
</dbReference>
<dbReference type="InterPro" id="IPR002292">
    <property type="entry name" value="Orn/put_carbamltrans"/>
</dbReference>
<dbReference type="InterPro" id="IPR024904">
    <property type="entry name" value="OTCase_ArgI"/>
</dbReference>
<dbReference type="NCBIfam" id="TIGR00658">
    <property type="entry name" value="orni_carb_tr"/>
    <property type="match status" value="1"/>
</dbReference>
<dbReference type="NCBIfam" id="NF001986">
    <property type="entry name" value="PRK00779.1"/>
    <property type="match status" value="1"/>
</dbReference>
<dbReference type="PANTHER" id="PTHR45753">
    <property type="entry name" value="ORNITHINE CARBAMOYLTRANSFERASE, MITOCHONDRIAL"/>
    <property type="match status" value="1"/>
</dbReference>
<dbReference type="PANTHER" id="PTHR45753:SF3">
    <property type="entry name" value="ORNITHINE TRANSCARBAMYLASE, MITOCHONDRIAL"/>
    <property type="match status" value="1"/>
</dbReference>
<dbReference type="Pfam" id="PF00185">
    <property type="entry name" value="OTCace"/>
    <property type="match status" value="1"/>
</dbReference>
<dbReference type="Pfam" id="PF02729">
    <property type="entry name" value="OTCace_N"/>
    <property type="match status" value="1"/>
</dbReference>
<dbReference type="PRINTS" id="PR00100">
    <property type="entry name" value="AOTCASE"/>
</dbReference>
<dbReference type="PRINTS" id="PR00102">
    <property type="entry name" value="OTCASE"/>
</dbReference>
<dbReference type="SUPFAM" id="SSF53671">
    <property type="entry name" value="Aspartate/ornithine carbamoyltransferase"/>
    <property type="match status" value="1"/>
</dbReference>
<proteinExistence type="inferred from homology"/>
<feature type="chain" id="PRO_0000112881" description="Ornithine carbamoyltransferase">
    <location>
        <begin position="1"/>
        <end position="319"/>
    </location>
</feature>
<feature type="binding site" evidence="2">
    <location>
        <begin position="63"/>
        <end position="66"/>
    </location>
    <ligand>
        <name>carbamoyl phosphate</name>
        <dbReference type="ChEBI" id="CHEBI:58228"/>
    </ligand>
</feature>
<feature type="binding site" evidence="2">
    <location>
        <position position="90"/>
    </location>
    <ligand>
        <name>carbamoyl phosphate</name>
        <dbReference type="ChEBI" id="CHEBI:58228"/>
    </ligand>
</feature>
<feature type="binding site" evidence="2">
    <location>
        <position position="114"/>
    </location>
    <ligand>
        <name>carbamoyl phosphate</name>
        <dbReference type="ChEBI" id="CHEBI:58228"/>
    </ligand>
</feature>
<feature type="binding site" evidence="2">
    <location>
        <begin position="141"/>
        <end position="144"/>
    </location>
    <ligand>
        <name>carbamoyl phosphate</name>
        <dbReference type="ChEBI" id="CHEBI:58228"/>
    </ligand>
</feature>
<feature type="binding site" evidence="2">
    <location>
        <position position="172"/>
    </location>
    <ligand>
        <name>L-ornithine</name>
        <dbReference type="ChEBI" id="CHEBI:46911"/>
    </ligand>
</feature>
<feature type="binding site" evidence="2">
    <location>
        <position position="236"/>
    </location>
    <ligand>
        <name>L-ornithine</name>
        <dbReference type="ChEBI" id="CHEBI:46911"/>
    </ligand>
</feature>
<feature type="binding site" evidence="2">
    <location>
        <begin position="240"/>
        <end position="241"/>
    </location>
    <ligand>
        <name>L-ornithine</name>
        <dbReference type="ChEBI" id="CHEBI:46911"/>
    </ligand>
</feature>
<feature type="binding site" evidence="2">
    <location>
        <begin position="276"/>
        <end position="277"/>
    </location>
    <ligand>
        <name>carbamoyl phosphate</name>
        <dbReference type="ChEBI" id="CHEBI:58228"/>
    </ligand>
</feature>
<feature type="binding site" evidence="2">
    <location>
        <position position="304"/>
    </location>
    <ligand>
        <name>carbamoyl phosphate</name>
        <dbReference type="ChEBI" id="CHEBI:58228"/>
    </ligand>
</feature>
<name>OTC_HALH5</name>
<reference key="1">
    <citation type="journal article" date="2000" name="Nucleic Acids Res.">
        <title>Complete genome sequence of the alkaliphilic bacterium Bacillus halodurans and genomic sequence comparison with Bacillus subtilis.</title>
        <authorList>
            <person name="Takami H."/>
            <person name="Nakasone K."/>
            <person name="Takaki Y."/>
            <person name="Maeno G."/>
            <person name="Sasaki R."/>
            <person name="Masui N."/>
            <person name="Fuji F."/>
            <person name="Hirama C."/>
            <person name="Nakamura Y."/>
            <person name="Ogasawara N."/>
            <person name="Kuhara S."/>
            <person name="Horikoshi K."/>
        </authorList>
    </citation>
    <scope>NUCLEOTIDE SEQUENCE [LARGE SCALE GENOMIC DNA]</scope>
    <source>
        <strain>ATCC BAA-125 / DSM 18197 / FERM 7344 / JCM 9153 / C-125</strain>
    </source>
</reference>
<gene>
    <name evidence="2" type="primary">argF</name>
    <name type="ordered locus">BH2894</name>
</gene>
<sequence length="319" mass="34889">MNHLSEKVISLKGRDLLTLLDYTPEEVQQLLTQALELKQKAKNGEPTPYLTGKSLGMIFENASTRTRVSFEVGMTQLGGHALFLSPKDLQIGRGEPIKDTANVLSRYVDAIMIRTNSHESVEELAHYATVPVINALTDAYHPCQALADALTILEKKETLIGKKLAYIGDGNNVCHSLLAIGAKTGMDVTVATPKGYEVDQEIFQRATEAAKETGATLVQTTNPQVAAENADAIYTDVWASMGYEAEQSEREEVFQPYQVNDQLLTLAKKDVSFLHCLPAHRGEEVTASVIDGPHSAIYDQAENRLHAQKAVLTALLIGE</sequence>
<keyword id="KW-0028">Amino-acid biosynthesis</keyword>
<keyword id="KW-0055">Arginine biosynthesis</keyword>
<keyword id="KW-0963">Cytoplasm</keyword>
<keyword id="KW-1185">Reference proteome</keyword>
<keyword id="KW-0808">Transferase</keyword>
<organism>
    <name type="scientific">Halalkalibacterium halodurans (strain ATCC BAA-125 / DSM 18197 / FERM 7344 / JCM 9153 / C-125)</name>
    <name type="common">Bacillus halodurans</name>
    <dbReference type="NCBI Taxonomy" id="272558"/>
    <lineage>
        <taxon>Bacteria</taxon>
        <taxon>Bacillati</taxon>
        <taxon>Bacillota</taxon>
        <taxon>Bacilli</taxon>
        <taxon>Bacillales</taxon>
        <taxon>Bacillaceae</taxon>
        <taxon>Halalkalibacterium (ex Joshi et al. 2022)</taxon>
    </lineage>
</organism>